<evidence type="ECO:0000250" key="1"/>
<evidence type="ECO:0000255" key="2"/>
<evidence type="ECO:0000256" key="3">
    <source>
        <dbReference type="SAM" id="MobiDB-lite"/>
    </source>
</evidence>
<evidence type="ECO:0000305" key="4"/>
<comment type="function">
    <text evidence="1">Involved in mitochondrial fission. Acts as an adapter protein required to form mitochondrial fission complexes. Formation of these complexes is required to promote constriction and fission of the mitochondrial compartment at a late step in mitochondrial division (By similarity).</text>
</comment>
<comment type="subcellular location">
    <subcellularLocation>
        <location evidence="1">Mitochondrion outer membrane</location>
        <topology evidence="1">Peripheral membrane protein</topology>
        <orientation evidence="1">Cytoplasmic side</orientation>
    </subcellularLocation>
</comment>
<comment type="similarity">
    <text evidence="4">Belongs to the WD repeat MDV1/CAF4 family.</text>
</comment>
<comment type="sequence caution" evidence="4">
    <conflict type="erroneous gene model prediction">
        <sequence resource="EMBL-CDS" id="EAQ87888"/>
    </conflict>
</comment>
<comment type="sequence caution" evidence="4">
    <conflict type="frameshift">
        <sequence resource="EMBL-CDS" id="EAQ87888"/>
    </conflict>
</comment>
<sequence>MDDPGHDNEFPDLSSFDDESSVISTRGLEAFGRKVTTTAAHLIAPRADPASNPTYQTAMTEVHRQLRRPGLQRSMFSMARTTPTDMVRSRLSTKEIQSRALAYVPDELLQNIPDGDSSYSLFQGFQASFPDFTEEGKKHRRRVSRGRKLLDEGPTIPDGTPESVQRLKKEKASMMHQFEMLGIRKNMASSEIREIDAKMENLAGMRRIILERLATLEQDEAILEHDIVEVEGRLEEAQELANEAGELAHTPKSEDDAASEKGDTPGFMSQSVYEKLPSVGSTSSKKKPRSIRRKTMPILHEHFEPGTMIRSMRAHHDSITALDFDAPFGLMVTAAMDDAVRVWDLNAGRCIGVLEGHTASVRTLQVEDNFLATGSMDATIRLWDLSKAHYDPQGSQFGKDDEDDEDAIAFENPDDHPVDPPAGSMSDCPLFTLEAHLDEITALHFRNNVLVSGSADKTLRQWDLEKGRCVQTLDVMWAAAQASALSTSDSTWRQTSRAPDTAADFVGALQVFESALACGTADGMVRLWDLRSGQVSRSLVGHTGPVTCLQFDDVHLVTGSLDRSIRIWDLRTGSSTTPLRTTTPITSMMFDTRRIVCAAGEDVVKVYDKVEGRHWDCGAGAVETEQEREPAVVERVRIRDGYMVEGRQDGIVGVWTC</sequence>
<gene>
    <name type="primary">MDV1</name>
    <name type="ORF">CHGG_04507</name>
</gene>
<organism>
    <name type="scientific">Chaetomium globosum (strain ATCC 6205 / CBS 148.51 / DSM 1962 / NBRC 6347 / NRRL 1970)</name>
    <name type="common">Soil fungus</name>
    <dbReference type="NCBI Taxonomy" id="306901"/>
    <lineage>
        <taxon>Eukaryota</taxon>
        <taxon>Fungi</taxon>
        <taxon>Dikarya</taxon>
        <taxon>Ascomycota</taxon>
        <taxon>Pezizomycotina</taxon>
        <taxon>Sordariomycetes</taxon>
        <taxon>Sordariomycetidae</taxon>
        <taxon>Sordariales</taxon>
        <taxon>Chaetomiaceae</taxon>
        <taxon>Chaetomium</taxon>
    </lineage>
</organism>
<reference key="1">
    <citation type="journal article" date="2015" name="Genome Announc.">
        <title>Draft genome sequence of the cellulolytic fungus Chaetomium globosum.</title>
        <authorList>
            <person name="Cuomo C.A."/>
            <person name="Untereiner W.A."/>
            <person name="Ma L.-J."/>
            <person name="Grabherr M."/>
            <person name="Birren B.W."/>
        </authorList>
    </citation>
    <scope>NUCLEOTIDE SEQUENCE [LARGE SCALE GENOMIC DNA]</scope>
    <source>
        <strain>ATCC 6205 / CBS 148.51 / DSM 1962 / NBRC 6347 / NRRL 1970</strain>
    </source>
</reference>
<keyword id="KW-0175">Coiled coil</keyword>
<keyword id="KW-0472">Membrane</keyword>
<keyword id="KW-0496">Mitochondrion</keyword>
<keyword id="KW-1000">Mitochondrion outer membrane</keyword>
<keyword id="KW-1185">Reference proteome</keyword>
<keyword id="KW-0677">Repeat</keyword>
<keyword id="KW-0853">WD repeat</keyword>
<name>MDV1_CHAGB</name>
<proteinExistence type="inferred from homology"/>
<protein>
    <recommendedName>
        <fullName>Mitochondrial division protein 1</fullName>
    </recommendedName>
</protein>
<feature type="chain" id="PRO_0000330102" description="Mitochondrial division protein 1">
    <location>
        <begin position="1"/>
        <end position="657"/>
    </location>
</feature>
<feature type="repeat" description="WD 1">
    <location>
        <begin position="314"/>
        <end position="355"/>
    </location>
</feature>
<feature type="repeat" description="WD 2">
    <location>
        <begin position="356"/>
        <end position="393"/>
    </location>
</feature>
<feature type="repeat" description="WD 3">
    <location>
        <begin position="435"/>
        <end position="474"/>
    </location>
</feature>
<feature type="repeat" description="WD 4">
    <location>
        <begin position="495"/>
        <end position="538"/>
    </location>
</feature>
<feature type="repeat" description="WD 5">
    <location>
        <begin position="541"/>
        <end position="578"/>
    </location>
</feature>
<feature type="repeat" description="WD 6">
    <location>
        <begin position="580"/>
        <end position="617"/>
    </location>
</feature>
<feature type="repeat" description="WD 7">
    <location>
        <begin position="626"/>
        <end position="657"/>
    </location>
</feature>
<feature type="region of interest" description="Disordered" evidence="3">
    <location>
        <begin position="245"/>
        <end position="293"/>
    </location>
</feature>
<feature type="coiled-coil region" evidence="2">
    <location>
        <begin position="211"/>
        <end position="249"/>
    </location>
</feature>
<feature type="compositionally biased region" description="Basic and acidic residues" evidence="3">
    <location>
        <begin position="249"/>
        <end position="263"/>
    </location>
</feature>
<feature type="compositionally biased region" description="Basic residues" evidence="3">
    <location>
        <begin position="284"/>
        <end position="293"/>
    </location>
</feature>
<dbReference type="EMBL" id="CH408032">
    <property type="protein sequence ID" value="EAQ87888.1"/>
    <property type="status" value="ALT_SEQ"/>
    <property type="molecule type" value="Genomic_DNA"/>
</dbReference>
<dbReference type="RefSeq" id="XP_001223721.1">
    <property type="nucleotide sequence ID" value="XM_001223720.1"/>
</dbReference>
<dbReference type="SMR" id="Q2H139"/>
<dbReference type="FunCoup" id="Q2H139">
    <property type="interactions" value="36"/>
</dbReference>
<dbReference type="STRING" id="306901.Q2H139"/>
<dbReference type="GeneID" id="4392468"/>
<dbReference type="VEuPathDB" id="FungiDB:CHGG_04507"/>
<dbReference type="eggNOG" id="KOG4155">
    <property type="taxonomic scope" value="Eukaryota"/>
</dbReference>
<dbReference type="HOGENOM" id="CLU_012350_1_1_1"/>
<dbReference type="InParanoid" id="Q2H139"/>
<dbReference type="OrthoDB" id="496at2759"/>
<dbReference type="Proteomes" id="UP000001056">
    <property type="component" value="Unassembled WGS sequence"/>
</dbReference>
<dbReference type="GO" id="GO:0005741">
    <property type="term" value="C:mitochondrial outer membrane"/>
    <property type="evidence" value="ECO:0007669"/>
    <property type="project" value="UniProtKB-SubCell"/>
</dbReference>
<dbReference type="GO" id="GO:1990234">
    <property type="term" value="C:transferase complex"/>
    <property type="evidence" value="ECO:0007669"/>
    <property type="project" value="UniProtKB-ARBA"/>
</dbReference>
<dbReference type="CDD" id="cd22881">
    <property type="entry name" value="Mdv1_N"/>
    <property type="match status" value="1"/>
</dbReference>
<dbReference type="CDD" id="cd00200">
    <property type="entry name" value="WD40"/>
    <property type="match status" value="1"/>
</dbReference>
<dbReference type="FunFam" id="2.130.10.10:FF:000881">
    <property type="entry name" value="Mitochondrial division protein 1"/>
    <property type="match status" value="1"/>
</dbReference>
<dbReference type="Gene3D" id="6.10.280.220">
    <property type="match status" value="1"/>
</dbReference>
<dbReference type="Gene3D" id="2.130.10.10">
    <property type="entry name" value="YVTN repeat-like/Quinoprotein amine dehydrogenase"/>
    <property type="match status" value="2"/>
</dbReference>
<dbReference type="InterPro" id="IPR020472">
    <property type="entry name" value="G-protein_beta_WD-40_rep"/>
</dbReference>
<dbReference type="InterPro" id="IPR015943">
    <property type="entry name" value="WD40/YVTN_repeat-like_dom_sf"/>
</dbReference>
<dbReference type="InterPro" id="IPR019775">
    <property type="entry name" value="WD40_repeat_CS"/>
</dbReference>
<dbReference type="InterPro" id="IPR036322">
    <property type="entry name" value="WD40_repeat_dom_sf"/>
</dbReference>
<dbReference type="InterPro" id="IPR001680">
    <property type="entry name" value="WD40_rpt"/>
</dbReference>
<dbReference type="PANTHER" id="PTHR22847:SF637">
    <property type="entry name" value="WD REPEAT DOMAIN 5B"/>
    <property type="match status" value="1"/>
</dbReference>
<dbReference type="PANTHER" id="PTHR22847">
    <property type="entry name" value="WD40 REPEAT PROTEIN"/>
    <property type="match status" value="1"/>
</dbReference>
<dbReference type="Pfam" id="PF00400">
    <property type="entry name" value="WD40"/>
    <property type="match status" value="4"/>
</dbReference>
<dbReference type="PRINTS" id="PR00320">
    <property type="entry name" value="GPROTEINBRPT"/>
</dbReference>
<dbReference type="SMART" id="SM00320">
    <property type="entry name" value="WD40"/>
    <property type="match status" value="6"/>
</dbReference>
<dbReference type="SUPFAM" id="SSF50978">
    <property type="entry name" value="WD40 repeat-like"/>
    <property type="match status" value="1"/>
</dbReference>
<dbReference type="PROSITE" id="PS00678">
    <property type="entry name" value="WD_REPEATS_1"/>
    <property type="match status" value="3"/>
</dbReference>
<dbReference type="PROSITE" id="PS50082">
    <property type="entry name" value="WD_REPEATS_2"/>
    <property type="match status" value="5"/>
</dbReference>
<dbReference type="PROSITE" id="PS50294">
    <property type="entry name" value="WD_REPEATS_REGION"/>
    <property type="match status" value="1"/>
</dbReference>
<accession>Q2H139</accession>